<proteinExistence type="inferred from homology"/>
<protein>
    <recommendedName>
        <fullName>Large T antigen</fullName>
        <shortName>LT</shortName>
        <shortName>LT-AG</shortName>
        <ecNumber evidence="1">5.6.2.4</ecNumber>
    </recommendedName>
    <alternativeName>
        <fullName evidence="6">DNA 3'-5' helicase large T antigen</fullName>
    </alternativeName>
</protein>
<reference key="1">
    <citation type="journal article" date="1995" name="J. Virol.">
        <title>Genetic and structural analysis of a virulence determinant in polyomavirus VP1.</title>
        <authorList>
            <person name="Bauer P.H."/>
            <person name="Bronson R.T."/>
            <person name="Fung S.C."/>
            <person name="Freund R."/>
            <person name="Stehle T."/>
            <person name="Harrison S.C."/>
            <person name="Benjamin T.L."/>
        </authorList>
    </citation>
    <scope>NUCLEOTIDE SEQUENCE [GENOMIC DNA]</scope>
    <source>
        <strain>Isolate LID</strain>
        <strain>Isolate PTA</strain>
    </source>
</reference>
<comment type="function">
    <text evidence="1">Isoform large T antigen is a key early protein essential for both driving viral replication and inducing cellular transformation. Plays a role in viral genome replication by driving entry of quiescent cells into the cell cycle and by autoregulating the synthesis of viral early mRNA. Displays highly oncogenic activities by corrupting the host cellular checkpoint mechanisms that guard cell division and the transcription, replication, and repair of DNA. Participates in the modulation of cellular gene expression preceeding viral DNA replication. This step involves binding to host key cell cycle regulators retinoblastoma protein RB1/pRb and TP53. Induces the disassembly of host E2F1 transcription factors from RB1, thus promoting transcriptional activation of E2F1-regulated S-phase genes. Inhibits host TP53 binding to DNA, abrogating the ability of TP53 to stimulate gene expression. Plays the role of a TFIID-associated factor (TAF) in transcription initiation for all three RNA polymerases, by stabilizing the TBP-TFIIA complex on promoters. Initiates viral DNA replication and unwinding via interactions with the viral origin of replication. Binds two adjacent sites in the SV40 origin. The replication fork movement is facilitated by Large T antigen helicase activity. Has processive 3'-5' DNA helicase activity which requires a short 3' single-stranded region and ATP. Activates the transcription of viral late mRNA, through host TBP and TFIIA stabilization. Interferes with histone deacetylation mediated by HDAC1, leading to activation of transcription.</text>
</comment>
<comment type="catalytic activity">
    <reaction evidence="1">
        <text>Couples ATP hydrolysis with the unwinding of duplex DNA by translocating in the 3'-5' direction.</text>
        <dbReference type="EC" id="5.6.2.4"/>
    </reaction>
</comment>
<comment type="catalytic activity">
    <reaction evidence="1">
        <text>ATP + H2O = ADP + phosphate + H(+)</text>
        <dbReference type="Rhea" id="RHEA:13065"/>
        <dbReference type="ChEBI" id="CHEBI:15377"/>
        <dbReference type="ChEBI" id="CHEBI:15378"/>
        <dbReference type="ChEBI" id="CHEBI:30616"/>
        <dbReference type="ChEBI" id="CHEBI:43474"/>
        <dbReference type="ChEBI" id="CHEBI:456216"/>
        <dbReference type="EC" id="5.6.2.4"/>
    </reaction>
</comment>
<comment type="cofactor">
    <cofactor evidence="1">
        <name>Mg(2+)</name>
        <dbReference type="ChEBI" id="CHEBI:18420"/>
    </cofactor>
    <text evidence="1">DNA helicase activity requires Mg(2+).</text>
</comment>
<comment type="subunit">
    <text evidence="1">Forms homohexamers in the presence of ATP. Interacts with host HDAC1. Interacts (via LXCXE domain) with host RB1; the interaction induces the aberrant dissociation of RB1-E2F1 complex thereby disrupting RB1's activity. Interacts (via LXCXE domain) with host pRB-related proteins RBL1 and RBL2. Interacts (via C-terminus) with host TOP1 and POLA1 allowing DNA replication. Interacts with host preinitiation complex components TBP, TFIIA and TFIID to regulate transcription initiation.</text>
</comment>
<comment type="subcellular location">
    <subcellularLocation>
        <location evidence="1">Host nucleus</location>
    </subcellularLocation>
</comment>
<comment type="alternative products">
    <event type="alternative splicing"/>
    <isoform>
        <id>P0DOJ6-1</id>
        <id>P03074-1</id>
        <name>Large T antigen</name>
        <sequence type="displayed"/>
    </isoform>
    <isoform>
        <id>P0DOJ9-1</id>
        <id>P03076-1</id>
        <name>Middle T antigen</name>
        <sequence type="external"/>
    </isoform>
    <isoform>
        <id>P0DOJ6-2</id>
        <name>Small t antigen</name>
        <sequence type="not described"/>
    </isoform>
</comment>
<comment type="domain">
    <text evidence="1">The J domain is essential for multiple viral activities, including virion assembly, viral DNA replication, transformation and transcriptional activation.</text>
</comment>
<comment type="domain">
    <text evidence="1">The LXCXE motif specifically binds to host pRB, RBL1, and RBL2.</text>
</comment>
<comment type="domain">
    <text evidence="1">The zinc finger region contributes to protein-protein interactions essential for the assembly of stable T-antigen hexamers at the origin of replication. The hexamers are required for subsequent alterations in the structure of origin DNA.</text>
</comment>
<comment type="domain">
    <text evidence="1">The ATP binding/ATPase domain is required for proper hexamer assembly and helicase activity.</text>
</comment>
<comment type="PTM">
    <text evidence="1">Phosphorylated on both serine and threonine residues. Small t antigen inhibits the dephosphorylation by the AC form of PP2A.</text>
</comment>
<comment type="PTM">
    <text evidence="1">O-Glycosylated near the C-terminal region.</text>
</comment>
<comment type="PTM">
    <text evidence="1">Acetylated by CBP in a TP53-dependent manner.</text>
</comment>
<sequence>MDRVLSRADKERLLELLKLPRQLWGDFGRMQQAYKQQSLLLHPDKGGSHALMQELNSLWGTFKTEVYNLRMNLGGTGFQGSPPRTAERGTEESGHSPLHDDYWSFSYGSKYFTREWNDFFRKWDPSYQSPPKTAESSEQPDLFCYEEPLLSPNPSSPTDTPAHTAGRRRNPCVAEPDDSISPDPPRTPVSRKRPRPAGATGGGGGGVHANGGSVFGHPTGGTSTPAHPPPYHSQGGSESMGGSDSSGFAEGSFRSDPRCESENESYSQSCSQSSFNATPPKKAREDPAPSDFPSSLTGYLSHAIYSNKTFPAFLVYSTKEKCKQLYDTIGKFRPEFKCLVHYEEGGMLFFLTMTKHRVSAVKNYCSKLCSVSFLMCKAVTKPMECYQVVTAAPFQLITENKPGLHQFEFTDEPEEQKAVDWIMVADFALENNLDDPLLIMGYYLDFAKEVPSCIKCSKEETRLQIHWKNHRKHAENADLFLNCKAQKTICQQAADGVLASRRLKLVECTRSQLLKERLQQSLLRLKELGSSDALLYLAGVAWYQCLLEDFPQTLFKMLKLLTENVPKRRNILFRGPVNSGKTGLAAALISLLGGKSLNINCPADKLAFELGVAQDQFVVCFEDVKGQIALNKQLQPGMGVANLDNLRDYLDGSVKVNLEKKHSNKRSQLFPPCVCTMNEYLLPQTVWARFHMVLDFTCKPHLAQSLEKCEFLQRERIIQSGDTLALLLIWNFTSDVFDPDIQGLVKEVRDQFASECSYSLFCDILCNVQEGDDPLKDICEYS</sequence>
<dbReference type="EC" id="5.6.2.4" evidence="1"/>
<dbReference type="EMBL" id="U27812">
    <property type="protein sequence ID" value="AAA93241.1"/>
    <property type="molecule type" value="Genomic_DNA"/>
</dbReference>
<dbReference type="EMBL" id="U27813">
    <property type="protein sequence ID" value="AAA93245.1"/>
    <property type="molecule type" value="Genomic_DNA"/>
</dbReference>
<dbReference type="SMR" id="P0DOJ6"/>
<dbReference type="MINT" id="P0DOJ6"/>
<dbReference type="Proteomes" id="UP000099402">
    <property type="component" value="Genome"/>
</dbReference>
<dbReference type="Proteomes" id="UP000161622">
    <property type="component" value="Genome"/>
</dbReference>
<dbReference type="GO" id="GO:0042025">
    <property type="term" value="C:host cell nucleus"/>
    <property type="evidence" value="ECO:0007669"/>
    <property type="project" value="UniProtKB-SubCell"/>
</dbReference>
<dbReference type="GO" id="GO:0005524">
    <property type="term" value="F:ATP binding"/>
    <property type="evidence" value="ECO:0007669"/>
    <property type="project" value="UniProtKB-KW"/>
</dbReference>
<dbReference type="GO" id="GO:0016887">
    <property type="term" value="F:ATP hydrolysis activity"/>
    <property type="evidence" value="ECO:0007669"/>
    <property type="project" value="RHEA"/>
</dbReference>
<dbReference type="GO" id="GO:0003688">
    <property type="term" value="F:DNA replication origin binding"/>
    <property type="evidence" value="ECO:0007669"/>
    <property type="project" value="InterPro"/>
</dbReference>
<dbReference type="GO" id="GO:0004386">
    <property type="term" value="F:helicase activity"/>
    <property type="evidence" value="ECO:0007669"/>
    <property type="project" value="UniProtKB-KW"/>
</dbReference>
<dbReference type="GO" id="GO:0008270">
    <property type="term" value="F:zinc ion binding"/>
    <property type="evidence" value="ECO:0007669"/>
    <property type="project" value="UniProtKB-KW"/>
</dbReference>
<dbReference type="GO" id="GO:0006260">
    <property type="term" value="P:DNA replication"/>
    <property type="evidence" value="ECO:0007669"/>
    <property type="project" value="UniProtKB-KW"/>
</dbReference>
<dbReference type="GO" id="GO:0039645">
    <property type="term" value="P:symbiont-mediated perturbation of host cell cycle G1/S transition checkpoint"/>
    <property type="evidence" value="ECO:0007669"/>
    <property type="project" value="UniProtKB-KW"/>
</dbReference>
<dbReference type="GO" id="GO:0052170">
    <property type="term" value="P:symbiont-mediated suppression of host innate immune response"/>
    <property type="evidence" value="ECO:0007669"/>
    <property type="project" value="UniProtKB-KW"/>
</dbReference>
<dbReference type="GO" id="GO:0039576">
    <property type="term" value="P:symbiont-mediated suppression of host JAK-STAT cascade via inhibition of JAK1 activity"/>
    <property type="evidence" value="ECO:0007669"/>
    <property type="project" value="UniProtKB-KW"/>
</dbReference>
<dbReference type="GO" id="GO:0039502">
    <property type="term" value="P:symbiont-mediated suppression of host type I interferon-mediated signaling pathway"/>
    <property type="evidence" value="ECO:0007669"/>
    <property type="project" value="UniProtKB-KW"/>
</dbReference>
<dbReference type="Gene3D" id="3.40.1310.20">
    <property type="match status" value="1"/>
</dbReference>
<dbReference type="Gene3D" id="1.10.287.110">
    <property type="entry name" value="DnaJ domain"/>
    <property type="match status" value="1"/>
</dbReference>
<dbReference type="Gene3D" id="1.20.1050.70">
    <property type="entry name" value="Large T antigen, SV40, domain 3"/>
    <property type="match status" value="1"/>
</dbReference>
<dbReference type="Gene3D" id="3.40.50.300">
    <property type="entry name" value="P-loop containing nucleotide triphosphate hydrolases"/>
    <property type="match status" value="1"/>
</dbReference>
<dbReference type="Gene3D" id="1.10.10.510">
    <property type="entry name" value="Zinc finger, large T-antigen D1 domain"/>
    <property type="match status" value="1"/>
</dbReference>
<dbReference type="InterPro" id="IPR001623">
    <property type="entry name" value="DnaJ_domain"/>
</dbReference>
<dbReference type="InterPro" id="IPR014015">
    <property type="entry name" value="Helicase_SF3_DNA-vir"/>
</dbReference>
<dbReference type="InterPro" id="IPR036869">
    <property type="entry name" value="J_dom_sf"/>
</dbReference>
<dbReference type="InterPro" id="IPR010932">
    <property type="entry name" value="Lg_T_Ag_Polyomavir_C"/>
</dbReference>
<dbReference type="InterPro" id="IPR027417">
    <property type="entry name" value="P-loop_NTPase"/>
</dbReference>
<dbReference type="InterPro" id="IPR003133">
    <property type="entry name" value="T_Ag_DNA-bd"/>
</dbReference>
<dbReference type="InterPro" id="IPR017910">
    <property type="entry name" value="Znf_lg_T-Ag_D1-typ"/>
</dbReference>
<dbReference type="InterPro" id="IPR037102">
    <property type="entry name" value="Znf_lg_T-Ag_D1_dom_sf"/>
</dbReference>
<dbReference type="Pfam" id="PF06431">
    <property type="entry name" value="Polyoma_lg_T_C"/>
    <property type="match status" value="1"/>
</dbReference>
<dbReference type="Pfam" id="PF02217">
    <property type="entry name" value="T_Ag_DNA_bind"/>
    <property type="match status" value="1"/>
</dbReference>
<dbReference type="SMART" id="SM00271">
    <property type="entry name" value="DnaJ"/>
    <property type="match status" value="1"/>
</dbReference>
<dbReference type="SUPFAM" id="SSF46565">
    <property type="entry name" value="Chaperone J-domain"/>
    <property type="match status" value="1"/>
</dbReference>
<dbReference type="SUPFAM" id="SSF55464">
    <property type="entry name" value="Origin of replication-binding domain, RBD-like"/>
    <property type="match status" value="1"/>
</dbReference>
<dbReference type="SUPFAM" id="SSF52540">
    <property type="entry name" value="P-loop containing nucleoside triphosphate hydrolases"/>
    <property type="match status" value="1"/>
</dbReference>
<dbReference type="PROSITE" id="PS51206">
    <property type="entry name" value="SF3_HELICASE_1"/>
    <property type="match status" value="1"/>
</dbReference>
<dbReference type="PROSITE" id="PS51287">
    <property type="entry name" value="T_AG_OBD"/>
    <property type="match status" value="1"/>
</dbReference>
<dbReference type="PROSITE" id="PS51341">
    <property type="entry name" value="ZF_LTAG_D1"/>
    <property type="match status" value="1"/>
</dbReference>
<accession>P0DOJ6</accession>
<accession>P03074</accession>
<accession>Q76TX5</accession>
<accession>Q76W02</accession>
<accession>Q89471</accession>
<feature type="chain" id="PRO_0000442783" description="Large T antigen">
    <location>
        <begin position="1"/>
        <end position="782"/>
    </location>
</feature>
<feature type="domain" description="J">
    <location>
        <begin position="12"/>
        <end position="75"/>
    </location>
</feature>
<feature type="domain" description="SF3 helicase" evidence="2">
    <location>
        <begin position="549"/>
        <end position="709"/>
    </location>
</feature>
<feature type="DNA-binding region" description="T-ag OBD" evidence="3">
    <location>
        <begin position="293"/>
        <end position="407"/>
    </location>
</feature>
<feature type="zinc finger region" description="T-ag D1-type" evidence="4">
    <location>
        <begin position="416"/>
        <end position="510"/>
    </location>
</feature>
<feature type="region of interest" description="Disordered" evidence="5">
    <location>
        <begin position="74"/>
        <end position="97"/>
    </location>
</feature>
<feature type="region of interest" description="Disordered" evidence="5">
    <location>
        <begin position="145"/>
        <end position="291"/>
    </location>
</feature>
<feature type="short sequence motif" description="LXCXE motif" evidence="1">
    <location>
        <begin position="142"/>
        <end position="146"/>
    </location>
</feature>
<feature type="short sequence motif" description="Nuclear localization signal" evidence="1">
    <location>
        <begin position="279"/>
        <end position="286"/>
    </location>
</feature>
<feature type="compositionally biased region" description="Basic and acidic residues" evidence="5">
    <location>
        <begin position="85"/>
        <end position="97"/>
    </location>
</feature>
<feature type="compositionally biased region" description="Low complexity" evidence="5">
    <location>
        <begin position="148"/>
        <end position="161"/>
    </location>
</feature>
<feature type="compositionally biased region" description="Gly residues" evidence="5">
    <location>
        <begin position="199"/>
        <end position="209"/>
    </location>
</feature>
<feature type="compositionally biased region" description="Low complexity" evidence="5">
    <location>
        <begin position="233"/>
        <end position="247"/>
    </location>
</feature>
<feature type="compositionally biased region" description="Low complexity" evidence="5">
    <location>
        <begin position="264"/>
        <end position="274"/>
    </location>
</feature>
<feature type="binding site" evidence="4">
    <location>
        <position position="453"/>
    </location>
    <ligand>
        <name>Zn(2+)</name>
        <dbReference type="ChEBI" id="CHEBI:29105"/>
    </ligand>
</feature>
<feature type="binding site" evidence="4">
    <location>
        <position position="456"/>
    </location>
    <ligand>
        <name>Zn(2+)</name>
        <dbReference type="ChEBI" id="CHEBI:29105"/>
    </ligand>
</feature>
<feature type="binding site" evidence="4">
    <location>
        <position position="466"/>
    </location>
    <ligand>
        <name>Zn(2+)</name>
        <dbReference type="ChEBI" id="CHEBI:29105"/>
    </ligand>
</feature>
<feature type="binding site" evidence="4">
    <location>
        <position position="470"/>
    </location>
    <ligand>
        <name>Zn(2+)</name>
        <dbReference type="ChEBI" id="CHEBI:29105"/>
    </ligand>
</feature>
<feature type="binding site" evidence="2">
    <location>
        <begin position="575"/>
        <end position="582"/>
    </location>
    <ligand>
        <name>ATP</name>
        <dbReference type="ChEBI" id="CHEBI:30616"/>
    </ligand>
</feature>
<feature type="modified residue" description="N-acetylmethionine; by host" evidence="1">
    <location>
        <position position="1"/>
    </location>
</feature>
<feature type="modified residue" description="Phosphothreonine; by host" evidence="1">
    <location>
        <position position="278"/>
    </location>
</feature>
<name>LT_POVM1</name>
<keyword id="KW-0007">Acetylation</keyword>
<keyword id="KW-0025">Alternative splicing</keyword>
<keyword id="KW-0067">ATP-binding</keyword>
<keyword id="KW-0235">DNA replication</keyword>
<keyword id="KW-0238">DNA-binding</keyword>
<keyword id="KW-0244">Early protein</keyword>
<keyword id="KW-1078">G1/S host cell cycle checkpoint dysregulation by virus</keyword>
<keyword id="KW-0347">Helicase</keyword>
<keyword id="KW-1048">Host nucleus</keyword>
<keyword id="KW-0945">Host-virus interaction</keyword>
<keyword id="KW-0378">Hydrolase</keyword>
<keyword id="KW-1090">Inhibition of host innate immune response by virus</keyword>
<keyword id="KW-1114">Inhibition of host interferon signaling pathway by virus</keyword>
<keyword id="KW-1096">Inhibition of host JAK1 by virus</keyword>
<keyword id="KW-0922">Interferon antiviral system evasion</keyword>
<keyword id="KW-0413">Isomerase</keyword>
<keyword id="KW-0460">Magnesium</keyword>
<keyword id="KW-0479">Metal-binding</keyword>
<keyword id="KW-1121">Modulation of host cell cycle by virus</keyword>
<keyword id="KW-0547">Nucleotide-binding</keyword>
<keyword id="KW-0553">Oncogene</keyword>
<keyword id="KW-0597">Phosphoprotein</keyword>
<keyword id="KW-0899">Viral immunoevasion</keyword>
<keyword id="KW-0862">Zinc</keyword>
<keyword id="KW-0863">Zinc-finger</keyword>
<organismHost>
    <name type="scientific">Mus musculus</name>
    <name type="common">Mouse</name>
    <dbReference type="NCBI Taxonomy" id="10090"/>
</organismHost>
<evidence type="ECO:0000250" key="1">
    <source>
        <dbReference type="UniProtKB" id="P03070"/>
    </source>
</evidence>
<evidence type="ECO:0000255" key="2">
    <source>
        <dbReference type="PROSITE-ProRule" id="PRU00551"/>
    </source>
</evidence>
<evidence type="ECO:0000255" key="3">
    <source>
        <dbReference type="PROSITE-ProRule" id="PRU00620"/>
    </source>
</evidence>
<evidence type="ECO:0000255" key="4">
    <source>
        <dbReference type="PROSITE-ProRule" id="PRU00671"/>
    </source>
</evidence>
<evidence type="ECO:0000256" key="5">
    <source>
        <dbReference type="SAM" id="MobiDB-lite"/>
    </source>
</evidence>
<evidence type="ECO:0000305" key="6"/>
<organism>
    <name type="scientific">Mus musculus polyomavirus 1</name>
    <name type="common">MPyV</name>
    <dbReference type="NCBI Taxonomy" id="1891730"/>
    <lineage>
        <taxon>Viruses</taxon>
        <taxon>Monodnaviria</taxon>
        <taxon>Shotokuvirae</taxon>
        <taxon>Cossaviricota</taxon>
        <taxon>Papovaviricetes</taxon>
        <taxon>Sepolyvirales</taxon>
        <taxon>Polyomaviridae</taxon>
        <taxon>Alphapolyomavirus</taxon>
    </lineage>
</organism>